<name>CISY_RICAK</name>
<sequence>DSEFAELKIRGKIFQLPILKASIGEDVIDISRVSAEVNCFTYDPGFMSTASCKSTITYIDGDKGILRHRGYNIKDLAEKSDFLEVAYLLIYGELPSIEQYNNFTKQVAHHSLVNERLHYLFQTFCSSSHPMAIMLAAIGSLSAFYPDLLNFKEADYELTAIRMIAKIPTIAAMSYKYSIGQPFVYPDNSLDFTENFLHMMFATPCTKYKVNPIIKNALNKIFILHADHEQNASTSTVRIAGSSGANAFACISTGIASLWGPAHGGANEAVINMLKEIGSSENIPKYIAKAKDKSDPFRLMGFGHRVYKNYDPRASVLKETCKEVLKELGQLENNPLLQIAIELEAIALKDEYFIERKLYPNVDFYSGIIYKAMGIPSQMFTVLFAIARTVGWMAQWKEMHEDPGQKISRPR</sequence>
<reference key="1">
    <citation type="journal article" date="1997" name="Int. J. Syst. Bacteriol.">
        <title>Citrate synthase gene comparison, a new tool for phylogenetic analysis, and its application for the rickettsiae.</title>
        <authorList>
            <person name="Roux V."/>
            <person name="Rydkina E."/>
            <person name="Eremeeva M."/>
            <person name="Raoult D."/>
        </authorList>
    </citation>
    <scope>NUCLEOTIDE SEQUENCE [GENOMIC DNA]</scope>
    <source>
        <strain>MK / Kaplan</strain>
    </source>
</reference>
<reference key="2">
    <citation type="submission" date="1995-12" db="EMBL/GenBank/DDBJ databases">
        <authorList>
            <person name="Azad A.F."/>
            <person name="Higgins J.A."/>
            <person name="Radulovic S."/>
            <person name="Schriefer M.E."/>
        </authorList>
    </citation>
    <scope>NUCLEOTIDE SEQUENCE [GENOMIC DNA] OF 259-385</scope>
    <source>
        <strain>MK / Kaplan</strain>
    </source>
</reference>
<feature type="chain" id="PRO_0000169957" description="Citrate synthase">
    <location>
        <begin position="1" status="less than"/>
        <end position="411" status="greater than"/>
    </location>
</feature>
<feature type="active site" evidence="1">
    <location>
        <position position="304"/>
    </location>
</feature>
<feature type="active site" evidence="1">
    <location>
        <position position="363"/>
    </location>
</feature>
<feature type="non-terminal residue">
    <location>
        <position position="1"/>
    </location>
</feature>
<feature type="non-terminal residue">
    <location>
        <position position="411"/>
    </location>
</feature>
<dbReference type="EC" id="2.3.3.16"/>
<dbReference type="EMBL" id="U59717">
    <property type="protein sequence ID" value="AAB02953.1"/>
    <property type="molecule type" value="Genomic_DNA"/>
</dbReference>
<dbReference type="EMBL" id="U41752">
    <property type="protein sequence ID" value="AAB49577.1"/>
    <property type="molecule type" value="Genomic_DNA"/>
</dbReference>
<dbReference type="SMR" id="Q59730"/>
<dbReference type="UniPathway" id="UPA00223">
    <property type="reaction ID" value="UER00717"/>
</dbReference>
<dbReference type="GO" id="GO:0005737">
    <property type="term" value="C:cytoplasm"/>
    <property type="evidence" value="ECO:0007669"/>
    <property type="project" value="InterPro"/>
</dbReference>
<dbReference type="GO" id="GO:0004108">
    <property type="term" value="F:citrate (Si)-synthase activity"/>
    <property type="evidence" value="ECO:0007669"/>
    <property type="project" value="InterPro"/>
</dbReference>
<dbReference type="GO" id="GO:0006099">
    <property type="term" value="P:tricarboxylic acid cycle"/>
    <property type="evidence" value="ECO:0007669"/>
    <property type="project" value="UniProtKB-UniPathway"/>
</dbReference>
<dbReference type="CDD" id="cd06114">
    <property type="entry name" value="EcCS_like"/>
    <property type="match status" value="1"/>
</dbReference>
<dbReference type="FunFam" id="1.10.230.10:FF:000002">
    <property type="entry name" value="Citrate synthase"/>
    <property type="match status" value="1"/>
</dbReference>
<dbReference type="Gene3D" id="2.20.28.60">
    <property type="match status" value="1"/>
</dbReference>
<dbReference type="Gene3D" id="1.10.580.10">
    <property type="entry name" value="Citrate Synthase, domain 1"/>
    <property type="match status" value="1"/>
</dbReference>
<dbReference type="Gene3D" id="1.10.230.10">
    <property type="entry name" value="Cytochrome P450-Terp, domain 2"/>
    <property type="match status" value="1"/>
</dbReference>
<dbReference type="InterPro" id="IPR016142">
    <property type="entry name" value="Citrate_synth-like_lrg_a-sub"/>
</dbReference>
<dbReference type="InterPro" id="IPR016143">
    <property type="entry name" value="Citrate_synth-like_sm_a-sub"/>
</dbReference>
<dbReference type="InterPro" id="IPR002020">
    <property type="entry name" value="Citrate_synthase"/>
</dbReference>
<dbReference type="InterPro" id="IPR019810">
    <property type="entry name" value="Citrate_synthase_AS"/>
</dbReference>
<dbReference type="InterPro" id="IPR024176">
    <property type="entry name" value="Citrate_synthase_bac-typ"/>
</dbReference>
<dbReference type="InterPro" id="IPR036969">
    <property type="entry name" value="Citrate_synthase_sf"/>
</dbReference>
<dbReference type="InterPro" id="IPR010953">
    <property type="entry name" value="Citrate_synthase_typ-I"/>
</dbReference>
<dbReference type="NCBIfam" id="TIGR01798">
    <property type="entry name" value="cit_synth_I"/>
    <property type="match status" value="1"/>
</dbReference>
<dbReference type="NCBIfam" id="NF004126">
    <property type="entry name" value="PRK05614.1"/>
    <property type="match status" value="1"/>
</dbReference>
<dbReference type="PANTHER" id="PTHR42871">
    <property type="entry name" value="CITRATE SYNTHASE"/>
    <property type="match status" value="1"/>
</dbReference>
<dbReference type="PANTHER" id="PTHR42871:SF1">
    <property type="entry name" value="CITRATE SYNTHASE"/>
    <property type="match status" value="1"/>
</dbReference>
<dbReference type="Pfam" id="PF00285">
    <property type="entry name" value="Citrate_synt"/>
    <property type="match status" value="1"/>
</dbReference>
<dbReference type="PIRSF" id="PIRSF001369">
    <property type="entry name" value="Citrate_synth"/>
    <property type="match status" value="1"/>
</dbReference>
<dbReference type="PRINTS" id="PR00143">
    <property type="entry name" value="CITRTSNTHASE"/>
</dbReference>
<dbReference type="SUPFAM" id="SSF48256">
    <property type="entry name" value="Citrate synthase"/>
    <property type="match status" value="1"/>
</dbReference>
<dbReference type="PROSITE" id="PS00480">
    <property type="entry name" value="CITRATE_SYNTHASE"/>
    <property type="match status" value="1"/>
</dbReference>
<organism>
    <name type="scientific">Rickettsia akari</name>
    <dbReference type="NCBI Taxonomy" id="786"/>
    <lineage>
        <taxon>Bacteria</taxon>
        <taxon>Pseudomonadati</taxon>
        <taxon>Pseudomonadota</taxon>
        <taxon>Alphaproteobacteria</taxon>
        <taxon>Rickettsiales</taxon>
        <taxon>Rickettsiaceae</taxon>
        <taxon>Rickettsieae</taxon>
        <taxon>Rickettsia</taxon>
        <taxon>spotted fever group</taxon>
    </lineage>
</organism>
<gene>
    <name type="primary">gltA</name>
</gene>
<proteinExistence type="inferred from homology"/>
<keyword id="KW-0808">Transferase</keyword>
<keyword id="KW-0816">Tricarboxylic acid cycle</keyword>
<comment type="catalytic activity">
    <reaction evidence="1">
        <text>oxaloacetate + acetyl-CoA + H2O = citrate + CoA + H(+)</text>
        <dbReference type="Rhea" id="RHEA:16845"/>
        <dbReference type="ChEBI" id="CHEBI:15377"/>
        <dbReference type="ChEBI" id="CHEBI:15378"/>
        <dbReference type="ChEBI" id="CHEBI:16452"/>
        <dbReference type="ChEBI" id="CHEBI:16947"/>
        <dbReference type="ChEBI" id="CHEBI:57287"/>
        <dbReference type="ChEBI" id="CHEBI:57288"/>
        <dbReference type="EC" id="2.3.3.16"/>
    </reaction>
</comment>
<comment type="pathway">
    <text>Carbohydrate metabolism; tricarboxylic acid cycle; isocitrate from oxaloacetate: step 1/2.</text>
</comment>
<comment type="miscellaneous">
    <text>Citrate synthase is found in nearly all cells capable of oxidative metabolism.</text>
</comment>
<comment type="similarity">
    <text evidence="2">Belongs to the citrate synthase family.</text>
</comment>
<evidence type="ECO:0000255" key="1">
    <source>
        <dbReference type="PROSITE-ProRule" id="PRU10117"/>
    </source>
</evidence>
<evidence type="ECO:0000305" key="2"/>
<protein>
    <recommendedName>
        <fullName>Citrate synthase</fullName>
        <ecNumber>2.3.3.16</ecNumber>
    </recommendedName>
</protein>
<accession>Q59730</accession>
<accession>Q59729</accession>